<reference key="1">
    <citation type="journal article" date="1987" name="Proc. Natl. Acad. Sci. U.S.A.">
        <title>Distinct forms of the beta subunit of GTP-binding regulatory proteins identified by molecular cloning.</title>
        <authorList>
            <person name="Fong H.K.W."/>
            <person name="Amatruda T.T. III"/>
            <person name="Birren B.W."/>
            <person name="Simon M.I."/>
        </authorList>
    </citation>
    <scope>NUCLEOTIDE SEQUENCE [MRNA] (ISOFORM 1)</scope>
</reference>
<reference key="2">
    <citation type="journal article" date="1987" name="Proc. Natl. Acad. Sci. U.S.A.">
        <title>A second form of the beta subunit of signal-transducing G proteins.</title>
        <authorList>
            <person name="Gao B."/>
            <person name="Gilman A.G."/>
            <person name="Robishaw J.D."/>
        </authorList>
    </citation>
    <scope>NUCLEOTIDE SEQUENCE [MRNA] (ISOFORM 1)</scope>
</reference>
<reference key="3">
    <citation type="journal article" date="1998" name="Genome Res.">
        <title>Large-scale sequencing of two regions in human chromosome 7q22: analysis of 650 kb of genomic sequence around the EPO and CUTL1 loci reveals 17 genes.</title>
        <authorList>
            <person name="Gloeckner G."/>
            <person name="Scherer S."/>
            <person name="Schattevoy R."/>
            <person name="Boright A.P."/>
            <person name="Weber J."/>
            <person name="Tsui L.-C."/>
            <person name="Rosenthal A."/>
        </authorList>
    </citation>
    <scope>NUCLEOTIDE SEQUENCE [GENOMIC DNA]</scope>
</reference>
<reference key="4">
    <citation type="submission" date="2002-03" db="EMBL/GenBank/DDBJ databases">
        <title>cDNA clones of human proteins involved in signal transduction sequenced by the Guthrie cDNA resource center (www.cdna.org).</title>
        <authorList>
            <person name="Puhl H.L. III"/>
            <person name="Ikeda S.R."/>
            <person name="Aronstam R.S."/>
        </authorList>
    </citation>
    <scope>NUCLEOTIDE SEQUENCE [LARGE SCALE MRNA] (ISOFORM 1)</scope>
</reference>
<reference key="5">
    <citation type="journal article" date="2004" name="Nat. Genet.">
        <title>Complete sequencing and characterization of 21,243 full-length human cDNAs.</title>
        <authorList>
            <person name="Ota T."/>
            <person name="Suzuki Y."/>
            <person name="Nishikawa T."/>
            <person name="Otsuki T."/>
            <person name="Sugiyama T."/>
            <person name="Irie R."/>
            <person name="Wakamatsu A."/>
            <person name="Hayashi K."/>
            <person name="Sato H."/>
            <person name="Nagai K."/>
            <person name="Kimura K."/>
            <person name="Makita H."/>
            <person name="Sekine M."/>
            <person name="Obayashi M."/>
            <person name="Nishi T."/>
            <person name="Shibahara T."/>
            <person name="Tanaka T."/>
            <person name="Ishii S."/>
            <person name="Yamamoto J."/>
            <person name="Saito K."/>
            <person name="Kawai Y."/>
            <person name="Isono Y."/>
            <person name="Nakamura Y."/>
            <person name="Nagahari K."/>
            <person name="Murakami K."/>
            <person name="Yasuda T."/>
            <person name="Iwayanagi T."/>
            <person name="Wagatsuma M."/>
            <person name="Shiratori A."/>
            <person name="Sudo H."/>
            <person name="Hosoiri T."/>
            <person name="Kaku Y."/>
            <person name="Kodaira H."/>
            <person name="Kondo H."/>
            <person name="Sugawara M."/>
            <person name="Takahashi M."/>
            <person name="Kanda K."/>
            <person name="Yokoi T."/>
            <person name="Furuya T."/>
            <person name="Kikkawa E."/>
            <person name="Omura Y."/>
            <person name="Abe K."/>
            <person name="Kamihara K."/>
            <person name="Katsuta N."/>
            <person name="Sato K."/>
            <person name="Tanikawa M."/>
            <person name="Yamazaki M."/>
            <person name="Ninomiya K."/>
            <person name="Ishibashi T."/>
            <person name="Yamashita H."/>
            <person name="Murakawa K."/>
            <person name="Fujimori K."/>
            <person name="Tanai H."/>
            <person name="Kimata M."/>
            <person name="Watanabe M."/>
            <person name="Hiraoka S."/>
            <person name="Chiba Y."/>
            <person name="Ishida S."/>
            <person name="Ono Y."/>
            <person name="Takiguchi S."/>
            <person name="Watanabe S."/>
            <person name="Yosida M."/>
            <person name="Hotuta T."/>
            <person name="Kusano J."/>
            <person name="Kanehori K."/>
            <person name="Takahashi-Fujii A."/>
            <person name="Hara H."/>
            <person name="Tanase T.-O."/>
            <person name="Nomura Y."/>
            <person name="Togiya S."/>
            <person name="Komai F."/>
            <person name="Hara R."/>
            <person name="Takeuchi K."/>
            <person name="Arita M."/>
            <person name="Imose N."/>
            <person name="Musashino K."/>
            <person name="Yuuki H."/>
            <person name="Oshima A."/>
            <person name="Sasaki N."/>
            <person name="Aotsuka S."/>
            <person name="Yoshikawa Y."/>
            <person name="Matsunawa H."/>
            <person name="Ichihara T."/>
            <person name="Shiohata N."/>
            <person name="Sano S."/>
            <person name="Moriya S."/>
            <person name="Momiyama H."/>
            <person name="Satoh N."/>
            <person name="Takami S."/>
            <person name="Terashima Y."/>
            <person name="Suzuki O."/>
            <person name="Nakagawa S."/>
            <person name="Senoh A."/>
            <person name="Mizoguchi H."/>
            <person name="Goto Y."/>
            <person name="Shimizu F."/>
            <person name="Wakebe H."/>
            <person name="Hishigaki H."/>
            <person name="Watanabe T."/>
            <person name="Sugiyama A."/>
            <person name="Takemoto M."/>
            <person name="Kawakami B."/>
            <person name="Yamazaki M."/>
            <person name="Watanabe K."/>
            <person name="Kumagai A."/>
            <person name="Itakura S."/>
            <person name="Fukuzumi Y."/>
            <person name="Fujimori Y."/>
            <person name="Komiyama M."/>
            <person name="Tashiro H."/>
            <person name="Tanigami A."/>
            <person name="Fujiwara T."/>
            <person name="Ono T."/>
            <person name="Yamada K."/>
            <person name="Fujii Y."/>
            <person name="Ozaki K."/>
            <person name="Hirao M."/>
            <person name="Ohmori Y."/>
            <person name="Kawabata A."/>
            <person name="Hikiji T."/>
            <person name="Kobatake N."/>
            <person name="Inagaki H."/>
            <person name="Ikema Y."/>
            <person name="Okamoto S."/>
            <person name="Okitani R."/>
            <person name="Kawakami T."/>
            <person name="Noguchi S."/>
            <person name="Itoh T."/>
            <person name="Shigeta K."/>
            <person name="Senba T."/>
            <person name="Matsumura K."/>
            <person name="Nakajima Y."/>
            <person name="Mizuno T."/>
            <person name="Morinaga M."/>
            <person name="Sasaki M."/>
            <person name="Togashi T."/>
            <person name="Oyama M."/>
            <person name="Hata H."/>
            <person name="Watanabe M."/>
            <person name="Komatsu T."/>
            <person name="Mizushima-Sugano J."/>
            <person name="Satoh T."/>
            <person name="Shirai Y."/>
            <person name="Takahashi Y."/>
            <person name="Nakagawa K."/>
            <person name="Okumura K."/>
            <person name="Nagase T."/>
            <person name="Nomura N."/>
            <person name="Kikuchi H."/>
            <person name="Masuho Y."/>
            <person name="Yamashita R."/>
            <person name="Nakai K."/>
            <person name="Yada T."/>
            <person name="Nakamura Y."/>
            <person name="Ohara O."/>
            <person name="Isogai T."/>
            <person name="Sugano S."/>
        </authorList>
    </citation>
    <scope>NUCLEOTIDE SEQUENCE [LARGE SCALE MRNA] (ISOFORM 2)</scope>
    <source>
        <tissue>Placenta</tissue>
    </source>
</reference>
<reference key="6">
    <citation type="journal article" date="2003" name="Nature">
        <title>The DNA sequence of human chromosome 7.</title>
        <authorList>
            <person name="Hillier L.W."/>
            <person name="Fulton R.S."/>
            <person name="Fulton L.A."/>
            <person name="Graves T.A."/>
            <person name="Pepin K.H."/>
            <person name="Wagner-McPherson C."/>
            <person name="Layman D."/>
            <person name="Maas J."/>
            <person name="Jaeger S."/>
            <person name="Walker R."/>
            <person name="Wylie K."/>
            <person name="Sekhon M."/>
            <person name="Becker M.C."/>
            <person name="O'Laughlin M.D."/>
            <person name="Schaller M.E."/>
            <person name="Fewell G.A."/>
            <person name="Delehaunty K.D."/>
            <person name="Miner T.L."/>
            <person name="Nash W.E."/>
            <person name="Cordes M."/>
            <person name="Du H."/>
            <person name="Sun H."/>
            <person name="Edwards J."/>
            <person name="Bradshaw-Cordum H."/>
            <person name="Ali J."/>
            <person name="Andrews S."/>
            <person name="Isak A."/>
            <person name="Vanbrunt A."/>
            <person name="Nguyen C."/>
            <person name="Du F."/>
            <person name="Lamar B."/>
            <person name="Courtney L."/>
            <person name="Kalicki J."/>
            <person name="Ozersky P."/>
            <person name="Bielicki L."/>
            <person name="Scott K."/>
            <person name="Holmes A."/>
            <person name="Harkins R."/>
            <person name="Harris A."/>
            <person name="Strong C.M."/>
            <person name="Hou S."/>
            <person name="Tomlinson C."/>
            <person name="Dauphin-Kohlberg S."/>
            <person name="Kozlowicz-Reilly A."/>
            <person name="Leonard S."/>
            <person name="Rohlfing T."/>
            <person name="Rock S.M."/>
            <person name="Tin-Wollam A.-M."/>
            <person name="Abbott A."/>
            <person name="Minx P."/>
            <person name="Maupin R."/>
            <person name="Strowmatt C."/>
            <person name="Latreille P."/>
            <person name="Miller N."/>
            <person name="Johnson D."/>
            <person name="Murray J."/>
            <person name="Woessner J.P."/>
            <person name="Wendl M.C."/>
            <person name="Yang S.-P."/>
            <person name="Schultz B.R."/>
            <person name="Wallis J.W."/>
            <person name="Spieth J."/>
            <person name="Bieri T.A."/>
            <person name="Nelson J.O."/>
            <person name="Berkowicz N."/>
            <person name="Wohldmann P.E."/>
            <person name="Cook L.L."/>
            <person name="Hickenbotham M.T."/>
            <person name="Eldred J."/>
            <person name="Williams D."/>
            <person name="Bedell J.A."/>
            <person name="Mardis E.R."/>
            <person name="Clifton S.W."/>
            <person name="Chissoe S.L."/>
            <person name="Marra M.A."/>
            <person name="Raymond C."/>
            <person name="Haugen E."/>
            <person name="Gillett W."/>
            <person name="Zhou Y."/>
            <person name="James R."/>
            <person name="Phelps K."/>
            <person name="Iadanoto S."/>
            <person name="Bubb K."/>
            <person name="Simms E."/>
            <person name="Levy R."/>
            <person name="Clendenning J."/>
            <person name="Kaul R."/>
            <person name="Kent W.J."/>
            <person name="Furey T.S."/>
            <person name="Baertsch R.A."/>
            <person name="Brent M.R."/>
            <person name="Keibler E."/>
            <person name="Flicek P."/>
            <person name="Bork P."/>
            <person name="Suyama M."/>
            <person name="Bailey J.A."/>
            <person name="Portnoy M.E."/>
            <person name="Torrents D."/>
            <person name="Chinwalla A.T."/>
            <person name="Gish W.R."/>
            <person name="Eddy S.R."/>
            <person name="McPherson J.D."/>
            <person name="Olson M.V."/>
            <person name="Eichler E.E."/>
            <person name="Green E.D."/>
            <person name="Waterston R.H."/>
            <person name="Wilson R.K."/>
        </authorList>
    </citation>
    <scope>NUCLEOTIDE SEQUENCE [LARGE SCALE GENOMIC DNA]</scope>
</reference>
<reference key="7">
    <citation type="journal article" date="2004" name="Genome Res.">
        <title>The status, quality, and expansion of the NIH full-length cDNA project: the Mammalian Gene Collection (MGC).</title>
        <authorList>
            <consortium name="The MGC Project Team"/>
        </authorList>
    </citation>
    <scope>NUCLEOTIDE SEQUENCE [LARGE SCALE MRNA] (ISOFORM 1)</scope>
    <source>
        <tissue>Pancreas</tissue>
        <tissue>Skin</tissue>
        <tissue>Uterus</tissue>
    </source>
</reference>
<reference key="8">
    <citation type="submission" date="2005-07" db="UniProtKB">
        <authorList>
            <person name="Bienvenut W.V."/>
        </authorList>
    </citation>
    <scope>PROTEIN SEQUENCE OF 2-15 AND 58-78</scope>
    <scope>CLEAVAGE OF INITIATOR METHIONINE</scope>
    <scope>ACETYLATION AT SER-2</scope>
    <scope>IDENTIFICATION BY MASS SPECTROMETRY</scope>
    <source>
        <tissue>Melanoma</tissue>
    </source>
</reference>
<reference key="9">
    <citation type="journal article" date="2003" name="Circ. Res.">
        <title>G Protein betagamma subunits stimulate p114RhoGEF, a guanine nucleotide exchange factor for RhoA and Rac1: regulation of cell shape and reactive oxygen species production.</title>
        <authorList>
            <person name="Niu J."/>
            <person name="Profirovic J."/>
            <person name="Pan H."/>
            <person name="Vaiskunaite R."/>
            <person name="Voyno-Yasenetskaya T."/>
        </authorList>
    </citation>
    <scope>INTERACTION WITH ARHGEF18</scope>
</reference>
<reference key="10">
    <citation type="journal article" date="2006" name="J. Neurosci. Res.">
        <title>Ataxin 10 induces neuritogenesis via interaction with G-protein beta2 subunit.</title>
        <authorList>
            <person name="Waragai M."/>
            <person name="Nagamitsu S."/>
            <person name="Xu W."/>
            <person name="Li Y.J."/>
            <person name="Lin X."/>
            <person name="Ashizawa T."/>
        </authorList>
    </citation>
    <scope>SUBCELLULAR LOCATION</scope>
    <scope>INTERACTION WITH ATXN10</scope>
</reference>
<reference key="11">
    <citation type="journal article" date="2009" name="Anal. Chem.">
        <title>Lys-N and trypsin cover complementary parts of the phosphoproteome in a refined SCX-based approach.</title>
        <authorList>
            <person name="Gauci S."/>
            <person name="Helbig A.O."/>
            <person name="Slijper M."/>
            <person name="Krijgsveld J."/>
            <person name="Heck A.J."/>
            <person name="Mohammed S."/>
        </authorList>
    </citation>
    <scope>ACETYLATION [LARGE SCALE ANALYSIS] AT SER-2</scope>
    <scope>CLEAVAGE OF INITIATOR METHIONINE [LARGE SCALE ANALYSIS]</scope>
    <scope>IDENTIFICATION BY MASS SPECTROMETRY [LARGE SCALE ANALYSIS]</scope>
</reference>
<reference key="12">
    <citation type="journal article" date="2009" name="Cell. Physiol. Biochem.">
        <title>The cationic region of Rhes mediates its interactions with specific Gbeta subunits.</title>
        <authorList>
            <person name="Hill C."/>
            <person name="Goddard A."/>
            <person name="Ladds G."/>
            <person name="Davey J."/>
        </authorList>
    </citation>
    <scope>INTERACTION WITH RASD2</scope>
</reference>
<reference key="13">
    <citation type="journal article" date="2011" name="BMC Syst. Biol.">
        <title>Initial characterization of the human central proteome.</title>
        <authorList>
            <person name="Burkard T.R."/>
            <person name="Planyavsky M."/>
            <person name="Kaupe I."/>
            <person name="Breitwieser F.P."/>
            <person name="Buerckstuemmer T."/>
            <person name="Bennett K.L."/>
            <person name="Superti-Furga G."/>
            <person name="Colinge J."/>
        </authorList>
    </citation>
    <scope>IDENTIFICATION BY MASS SPECTROMETRY [LARGE SCALE ANALYSIS]</scope>
</reference>
<reference key="14">
    <citation type="journal article" date="2015" name="Proteomics">
        <title>N-terminome analysis of the human mitochondrial proteome.</title>
        <authorList>
            <person name="Vaca Jacome A.S."/>
            <person name="Rabilloud T."/>
            <person name="Schaeffer-Reiss C."/>
            <person name="Rompais M."/>
            <person name="Ayoub D."/>
            <person name="Lane L."/>
            <person name="Bairoch A."/>
            <person name="Van Dorsselaer A."/>
            <person name="Carapito C."/>
        </authorList>
    </citation>
    <scope>IDENTIFICATION BY MASS SPECTROMETRY [LARGE SCALE ANALYSIS]</scope>
</reference>
<reference key="15">
    <citation type="journal article" date="2016" name="Ann. Clin. Transl. Neurol.">
        <title>Pathogenic mechanism of recurrent mutations of SCN8A in epileptic encephalopathy.</title>
        <authorList>
            <person name="Wagnon J.L."/>
            <person name="Barker B.S."/>
            <person name="Hounshell J.A."/>
            <person name="Haaxma C.A."/>
            <person name="Shealy A."/>
            <person name="Moss T."/>
            <person name="Parikh S."/>
            <person name="Messer R.D."/>
            <person name="Patel M.K."/>
            <person name="Meisler M.H."/>
        </authorList>
    </citation>
    <scope>INTERACTION WITH SCN8A</scope>
</reference>
<reference key="16">
    <citation type="journal article" date="2017" name="Circ. Res.">
        <title>A Mutation in the G-Protein Gene GNB2 Causes Familial Sinus Node and Atrioventricular Conduction Dysfunction.</title>
        <authorList>
            <person name="Stallmeyer B."/>
            <person name="Kuss J."/>
            <person name="Kotthoff S."/>
            <person name="Zumhagen S."/>
            <person name="Vowinkel K."/>
            <person name="Rinne S."/>
            <person name="Matschke L.A."/>
            <person name="Friedrich C."/>
            <person name="Schulze-Bahr E."/>
            <person name="Rust S."/>
            <person name="Seebohm G."/>
            <person name="Decher N."/>
            <person name="Schulze-Bahr E."/>
        </authorList>
    </citation>
    <scope>INVOLVEMENT IN SSS4</scope>
    <scope>VARIANT SSS4 LEU-52</scope>
    <scope>CHARACTERIZATION OF VARIANT SSS4 LEU-52</scope>
    <scope>SUBCELLULAR LOCATION</scope>
    <scope>TISSUE SPECIFICITY</scope>
    <scope>INTERACTION WITH GNAI2 AND GNG2</scope>
</reference>
<reference key="17">
    <citation type="journal article" date="2020" name="Eur. J. Med. Genet.">
        <title>Exome reports A de novo GNB2 variant associated with global developmental delay, intellectual disability, and dysmorphic features.</title>
        <authorList>
            <person name="Fukuda T."/>
            <person name="Hiraide T."/>
            <person name="Yamoto K."/>
            <person name="Nakashima M."/>
            <person name="Kawai T."/>
            <person name="Yanagi K."/>
            <person name="Ogata T."/>
            <person name="Saitsu H."/>
        </authorList>
    </citation>
    <scope>INVOLVEMENT IN NEDHYDF</scope>
    <scope>VARIANT NEDHYDF ARG-77</scope>
</reference>
<reference key="18">
    <citation type="journal article" date="2022" name="J. Med. Genet.">
        <title>Recurrent de novo missense variants in GNB2 can cause syndromic intellectual disability.</title>
        <authorList>
            <person name="Tan N.B."/>
            <person name="Pagnamenta A.T."/>
            <person name="Ferla M.P."/>
            <person name="Gadian J."/>
            <person name="Chung B.H."/>
            <person name="Chan M.C."/>
            <person name="Fung J.L."/>
            <person name="Cook E."/>
            <person name="Guter S."/>
            <person name="Boschann F."/>
            <person name="Heinen A."/>
            <person name="Schallner J."/>
            <person name="Mignot C."/>
            <person name="Keren B."/>
            <person name="Whalen S."/>
            <person name="Sarret C."/>
            <person name="Mittag D."/>
            <person name="Demmer L."/>
            <person name="Stapleton R."/>
            <person name="Saida K."/>
            <person name="Matsumoto N."/>
            <person name="Miyake N."/>
            <person name="Sheffer R."/>
            <person name="Mor-Shaked H."/>
            <person name="Barnett C.P."/>
            <person name="Byrne A.B."/>
            <person name="Scott H.S."/>
            <person name="Kraus A."/>
            <person name="Cappuccio G."/>
            <person name="Brunetti-Pierri N."/>
            <person name="Iorio R."/>
            <person name="Di Dato F."/>
            <person name="Pais L.S."/>
            <person name="Yeung A."/>
            <person name="Tan T.Y."/>
            <person name="Taylor J.C."/>
            <person name="Christodoulou J."/>
            <person name="White S.M."/>
        </authorList>
    </citation>
    <scope>INVOLVEMENT IN NEDHYDF</scope>
    <scope>VARIANTS NEDHYDF THR-73; ARG-77; GLU-89; THR-89 AND LEU-147</scope>
</reference>
<reference key="19">
    <citation type="journal article" date="2021" name="Eur. J. Med. Genet.">
        <title>Second patient with GNB2-related neurodevelopmental disease: Further evidence for a gene-disease association.</title>
        <authorList>
            <person name="Lansdon L.A."/>
            <person name="Fleming E.A."/>
            <person name="Viso F.D."/>
            <person name="Sullivan B.R."/>
            <person name="Saunders C.J."/>
        </authorList>
    </citation>
    <scope>INVOLVEMENT IN NEDHYDF</scope>
    <scope>VARIANT NEDHYDF TRP-77</scope>
</reference>
<name>GBB2_HUMAN</name>
<keyword id="KW-0002">3D-structure</keyword>
<keyword id="KW-0007">Acetylation</keyword>
<keyword id="KW-0025">Alternative splicing</keyword>
<keyword id="KW-1003">Cell membrane</keyword>
<keyword id="KW-0963">Cytoplasm</keyword>
<keyword id="KW-0903">Direct protein sequencing</keyword>
<keyword id="KW-0225">Disease variant</keyword>
<keyword id="KW-0991">Intellectual disability</keyword>
<keyword id="KW-0472">Membrane</keyword>
<keyword id="KW-0597">Phosphoprotein</keyword>
<keyword id="KW-1267">Proteomics identification</keyword>
<keyword id="KW-1185">Reference proteome</keyword>
<keyword id="KW-0677">Repeat</keyword>
<keyword id="KW-0807">Transducer</keyword>
<keyword id="KW-0853">WD repeat</keyword>
<gene>
    <name type="primary">GNB2</name>
</gene>
<dbReference type="EMBL" id="M16514">
    <property type="protein sequence ID" value="AAA03179.1"/>
    <property type="molecule type" value="mRNA"/>
</dbReference>
<dbReference type="EMBL" id="M36429">
    <property type="protein sequence ID" value="AAA63264.1"/>
    <property type="molecule type" value="mRNA"/>
</dbReference>
<dbReference type="EMBL" id="M16538">
    <property type="protein sequence ID" value="AAA35922.1"/>
    <property type="molecule type" value="mRNA"/>
</dbReference>
<dbReference type="EMBL" id="AF053356">
    <property type="protein sequence ID" value="AAC78794.1"/>
    <property type="molecule type" value="Genomic_DNA"/>
</dbReference>
<dbReference type="EMBL" id="AF501883">
    <property type="protein sequence ID" value="AAM15919.1"/>
    <property type="molecule type" value="mRNA"/>
</dbReference>
<dbReference type="EMBL" id="AK056750">
    <property type="protein sequence ID" value="BAG51803.1"/>
    <property type="molecule type" value="mRNA"/>
</dbReference>
<dbReference type="EMBL" id="AC009488">
    <property type="status" value="NOT_ANNOTATED_CDS"/>
    <property type="molecule type" value="Genomic_DNA"/>
</dbReference>
<dbReference type="EMBL" id="BC010073">
    <property type="protein sequence ID" value="AAH10073.1"/>
    <property type="molecule type" value="mRNA"/>
</dbReference>
<dbReference type="EMBL" id="BC012348">
    <property type="protein sequence ID" value="AAH12348.1"/>
    <property type="molecule type" value="mRNA"/>
</dbReference>
<dbReference type="EMBL" id="BC068003">
    <property type="protein sequence ID" value="AAH68003.1"/>
    <property type="molecule type" value="mRNA"/>
</dbReference>
<dbReference type="CCDS" id="CCDS5703.1">
    <molecule id="P62879-1"/>
</dbReference>
<dbReference type="PIR" id="B26617">
    <property type="entry name" value="RGHUB2"/>
</dbReference>
<dbReference type="RefSeq" id="NP_005264.2">
    <molecule id="P62879-1"/>
    <property type="nucleotide sequence ID" value="NM_005273.3"/>
</dbReference>
<dbReference type="PDB" id="9AVL">
    <property type="method" value="EM"/>
    <property type="resolution" value="3.80 A"/>
    <property type="chains" value="B=2-340"/>
</dbReference>
<dbReference type="PDBsum" id="9AVL"/>
<dbReference type="EMDB" id="EMD-43908"/>
<dbReference type="SMR" id="P62879"/>
<dbReference type="BioGRID" id="109045">
    <property type="interactions" value="553"/>
</dbReference>
<dbReference type="CORUM" id="P62879"/>
<dbReference type="FunCoup" id="P62879">
    <property type="interactions" value="2913"/>
</dbReference>
<dbReference type="IntAct" id="P62879">
    <property type="interactions" value="232"/>
</dbReference>
<dbReference type="MINT" id="P62879"/>
<dbReference type="STRING" id="9606.ENSP00000305260"/>
<dbReference type="TCDB" id="8.A.92.1.7">
    <property type="family name" value="the g-protein AlphaBetaGama complex (gpc) family"/>
</dbReference>
<dbReference type="GlyGen" id="P62879">
    <property type="glycosylation" value="1 site, 1 O-linked glycan (1 site)"/>
</dbReference>
<dbReference type="iPTMnet" id="P62879"/>
<dbReference type="PhosphoSitePlus" id="P62879"/>
<dbReference type="SwissPalm" id="P62879"/>
<dbReference type="BioMuta" id="GNB2"/>
<dbReference type="DMDM" id="51317304"/>
<dbReference type="OGP" id="P62879"/>
<dbReference type="REPRODUCTION-2DPAGE" id="P62879"/>
<dbReference type="jPOST" id="P62879"/>
<dbReference type="MassIVE" id="P62879"/>
<dbReference type="PaxDb" id="9606-ENSP00000305260"/>
<dbReference type="PeptideAtlas" id="P62879"/>
<dbReference type="PRIDE" id="P62879"/>
<dbReference type="ProteomicsDB" id="3536"/>
<dbReference type="ProteomicsDB" id="57444">
    <molecule id="P62879-1"/>
</dbReference>
<dbReference type="Pumba" id="P62879"/>
<dbReference type="TopDownProteomics" id="P62879-1">
    <molecule id="P62879-1"/>
</dbReference>
<dbReference type="Antibodypedia" id="4100">
    <property type="antibodies" value="208 antibodies from 33 providers"/>
</dbReference>
<dbReference type="DNASU" id="2783"/>
<dbReference type="Ensembl" id="ENST00000303210.9">
    <molecule id="P62879-1"/>
    <property type="protein sequence ID" value="ENSP00000305260.4"/>
    <property type="gene ID" value="ENSG00000172354.10"/>
</dbReference>
<dbReference type="Ensembl" id="ENST00000393924.1">
    <molecule id="P62879-1"/>
    <property type="protein sequence ID" value="ENSP00000377501.1"/>
    <property type="gene ID" value="ENSG00000172354.10"/>
</dbReference>
<dbReference type="Ensembl" id="ENST00000393926.5">
    <molecule id="P62879-1"/>
    <property type="protein sequence ID" value="ENSP00000377503.1"/>
    <property type="gene ID" value="ENSG00000172354.10"/>
</dbReference>
<dbReference type="Ensembl" id="ENST00000419828.5">
    <molecule id="P62879-2"/>
    <property type="protein sequence ID" value="ENSP00000390543.1"/>
    <property type="gene ID" value="ENSG00000172354.10"/>
</dbReference>
<dbReference type="Ensembl" id="ENST00000427895.5">
    <molecule id="P62879-2"/>
    <property type="protein sequence ID" value="ENSP00000400286.1"/>
    <property type="gene ID" value="ENSG00000172354.10"/>
</dbReference>
<dbReference type="GeneID" id="2783"/>
<dbReference type="KEGG" id="hsa:2783"/>
<dbReference type="MANE-Select" id="ENST00000303210.9">
    <property type="protein sequence ID" value="ENSP00000305260.4"/>
    <property type="RefSeq nucleotide sequence ID" value="NM_005273.4"/>
    <property type="RefSeq protein sequence ID" value="NP_005264.2"/>
</dbReference>
<dbReference type="UCSC" id="uc064ggx.1">
    <molecule id="P62879-1"/>
    <property type="organism name" value="human"/>
</dbReference>
<dbReference type="AGR" id="HGNC:4398"/>
<dbReference type="CTD" id="2783"/>
<dbReference type="DisGeNET" id="2783"/>
<dbReference type="GeneCards" id="GNB2"/>
<dbReference type="HGNC" id="HGNC:4398">
    <property type="gene designation" value="GNB2"/>
</dbReference>
<dbReference type="HPA" id="ENSG00000172354">
    <property type="expression patterns" value="Low tissue specificity"/>
</dbReference>
<dbReference type="MalaCards" id="GNB2"/>
<dbReference type="MIM" id="139390">
    <property type="type" value="gene"/>
</dbReference>
<dbReference type="MIM" id="619464">
    <property type="type" value="phenotype"/>
</dbReference>
<dbReference type="MIM" id="619503">
    <property type="type" value="phenotype"/>
</dbReference>
<dbReference type="neXtProt" id="NX_P62879"/>
<dbReference type="OpenTargets" id="ENSG00000172354"/>
<dbReference type="Orphanet" id="166282">
    <property type="disease" value="Familial sick sinus syndrome"/>
</dbReference>
<dbReference type="Orphanet" id="528084">
    <property type="disease" value="Non-specific syndromic intellectual disability"/>
</dbReference>
<dbReference type="PharmGKB" id="PA28778"/>
<dbReference type="VEuPathDB" id="HostDB:ENSG00000172354"/>
<dbReference type="eggNOG" id="KOG0286">
    <property type="taxonomic scope" value="Eukaryota"/>
</dbReference>
<dbReference type="GeneTree" id="ENSGT01000000214413"/>
<dbReference type="InParanoid" id="P62879"/>
<dbReference type="OMA" id="SCCRFLT"/>
<dbReference type="OrthoDB" id="10255630at2759"/>
<dbReference type="PAN-GO" id="P62879">
    <property type="GO annotations" value="4 GO annotations based on evolutionary models"/>
</dbReference>
<dbReference type="PhylomeDB" id="P62879"/>
<dbReference type="TreeFam" id="TF106149"/>
<dbReference type="PathwayCommons" id="P62879"/>
<dbReference type="Reactome" id="R-HSA-1296041">
    <property type="pathway name" value="Activation of G protein gated Potassium channels"/>
</dbReference>
<dbReference type="Reactome" id="R-HSA-163359">
    <property type="pathway name" value="Glucagon signaling in metabolic regulation"/>
</dbReference>
<dbReference type="Reactome" id="R-HSA-202040">
    <property type="pathway name" value="G-protein activation"/>
</dbReference>
<dbReference type="Reactome" id="R-HSA-381676">
    <property type="pathway name" value="Glucagon-like Peptide-1 (GLP1) regulates insulin secretion"/>
</dbReference>
<dbReference type="Reactome" id="R-HSA-392170">
    <property type="pathway name" value="ADP signalling through P2Y purinoceptor 12"/>
</dbReference>
<dbReference type="Reactome" id="R-HSA-392451">
    <property type="pathway name" value="G beta:gamma signalling through PI3Kgamma"/>
</dbReference>
<dbReference type="Reactome" id="R-HSA-392851">
    <property type="pathway name" value="Prostacyclin signalling through prostacyclin receptor"/>
</dbReference>
<dbReference type="Reactome" id="R-HSA-400042">
    <property type="pathway name" value="Adrenaline,noradrenaline inhibits insulin secretion"/>
</dbReference>
<dbReference type="Reactome" id="R-HSA-4086398">
    <property type="pathway name" value="Ca2+ pathway"/>
</dbReference>
<dbReference type="Reactome" id="R-HSA-416476">
    <property type="pathway name" value="G alpha (q) signalling events"/>
</dbReference>
<dbReference type="Reactome" id="R-HSA-416482">
    <property type="pathway name" value="G alpha (12/13) signalling events"/>
</dbReference>
<dbReference type="Reactome" id="R-HSA-418217">
    <property type="pathway name" value="G beta:gamma signalling through PLC beta"/>
</dbReference>
<dbReference type="Reactome" id="R-HSA-418555">
    <property type="pathway name" value="G alpha (s) signalling events"/>
</dbReference>
<dbReference type="Reactome" id="R-HSA-418592">
    <property type="pathway name" value="ADP signalling through P2Y purinoceptor 1"/>
</dbReference>
<dbReference type="Reactome" id="R-HSA-418594">
    <property type="pathway name" value="G alpha (i) signalling events"/>
</dbReference>
<dbReference type="Reactome" id="R-HSA-418597">
    <property type="pathway name" value="G alpha (z) signalling events"/>
</dbReference>
<dbReference type="Reactome" id="R-HSA-420092">
    <property type="pathway name" value="Glucagon-type ligand receptors"/>
</dbReference>
<dbReference type="Reactome" id="R-HSA-428930">
    <property type="pathway name" value="Thromboxane signalling through TP receptor"/>
</dbReference>
<dbReference type="Reactome" id="R-HSA-432040">
    <property type="pathway name" value="Vasopressin regulates renal water homeostasis via Aquaporins"/>
</dbReference>
<dbReference type="Reactome" id="R-HSA-456926">
    <property type="pathway name" value="Thrombin signalling through proteinase activated receptors (PARs)"/>
</dbReference>
<dbReference type="Reactome" id="R-HSA-500657">
    <property type="pathway name" value="Presynaptic function of Kainate receptors"/>
</dbReference>
<dbReference type="Reactome" id="R-HSA-6814122">
    <property type="pathway name" value="Cooperation of PDCL (PhLP1) and TRiC/CCT in G-protein beta folding"/>
</dbReference>
<dbReference type="Reactome" id="R-HSA-8964315">
    <property type="pathway name" value="G beta:gamma signalling through BTK"/>
</dbReference>
<dbReference type="Reactome" id="R-HSA-8964616">
    <property type="pathway name" value="G beta:gamma signalling through CDC42"/>
</dbReference>
<dbReference type="Reactome" id="R-HSA-9009391">
    <property type="pathway name" value="Extra-nuclear estrogen signaling"/>
</dbReference>
<dbReference type="Reactome" id="R-HSA-9634597">
    <property type="pathway name" value="GPER1 signaling"/>
</dbReference>
<dbReference type="Reactome" id="R-HSA-9660821">
    <property type="pathway name" value="ADORA2B mediated anti-inflammatory cytokines production"/>
</dbReference>
<dbReference type="Reactome" id="R-HSA-9856530">
    <property type="pathway name" value="High laminar flow shear stress activates signaling by PIEZO1 and PECAM1:CDH5:KDR in endothelial cells"/>
</dbReference>
<dbReference type="Reactome" id="R-HSA-997272">
    <property type="pathway name" value="Inhibition of voltage gated Ca2+ channels via Gbeta/gamma subunits"/>
</dbReference>
<dbReference type="SignaLink" id="P62879"/>
<dbReference type="SIGNOR" id="P62879"/>
<dbReference type="BioGRID-ORCS" id="2783">
    <property type="hits" value="65 hits in 1156 CRISPR screens"/>
</dbReference>
<dbReference type="CD-CODE" id="DEE660B4">
    <property type="entry name" value="Stress granule"/>
</dbReference>
<dbReference type="ChiTaRS" id="GNB2">
    <property type="organism name" value="human"/>
</dbReference>
<dbReference type="GeneWiki" id="GNB2"/>
<dbReference type="GenomeRNAi" id="2783"/>
<dbReference type="Pharos" id="P62879">
    <property type="development level" value="Tbio"/>
</dbReference>
<dbReference type="PRO" id="PR:P62879"/>
<dbReference type="Proteomes" id="UP000005640">
    <property type="component" value="Chromosome 7"/>
</dbReference>
<dbReference type="RNAct" id="P62879">
    <property type="molecule type" value="protein"/>
</dbReference>
<dbReference type="Bgee" id="ENSG00000172354">
    <property type="expression patterns" value="Expressed in lower esophagus mucosa and 198 other cell types or tissues"/>
</dbReference>
<dbReference type="ExpressionAtlas" id="P62879">
    <property type="expression patterns" value="baseline and differential"/>
</dbReference>
<dbReference type="GO" id="GO:0005737">
    <property type="term" value="C:cytoplasm"/>
    <property type="evidence" value="ECO:0000318"/>
    <property type="project" value="GO_Central"/>
</dbReference>
<dbReference type="GO" id="GO:0005829">
    <property type="term" value="C:cytosol"/>
    <property type="evidence" value="ECO:0000304"/>
    <property type="project" value="Reactome"/>
</dbReference>
<dbReference type="GO" id="GO:0070062">
    <property type="term" value="C:extracellular exosome"/>
    <property type="evidence" value="ECO:0007005"/>
    <property type="project" value="UniProtKB"/>
</dbReference>
<dbReference type="GO" id="GO:0005615">
    <property type="term" value="C:extracellular space"/>
    <property type="evidence" value="ECO:0007005"/>
    <property type="project" value="UniProtKB"/>
</dbReference>
<dbReference type="GO" id="GO:0005925">
    <property type="term" value="C:focal adhesion"/>
    <property type="evidence" value="ECO:0007005"/>
    <property type="project" value="UniProtKB"/>
</dbReference>
<dbReference type="GO" id="GO:0005834">
    <property type="term" value="C:heterotrimeric G-protein complex"/>
    <property type="evidence" value="ECO:0000318"/>
    <property type="project" value="GO_Central"/>
</dbReference>
<dbReference type="GO" id="GO:0005765">
    <property type="term" value="C:lysosomal membrane"/>
    <property type="evidence" value="ECO:0007005"/>
    <property type="project" value="UniProtKB"/>
</dbReference>
<dbReference type="GO" id="GO:0016020">
    <property type="term" value="C:membrane"/>
    <property type="evidence" value="ECO:0007005"/>
    <property type="project" value="UniProtKB"/>
</dbReference>
<dbReference type="GO" id="GO:0048471">
    <property type="term" value="C:perinuclear region of cytoplasm"/>
    <property type="evidence" value="ECO:0000314"/>
    <property type="project" value="UniProtKB"/>
</dbReference>
<dbReference type="GO" id="GO:0005886">
    <property type="term" value="C:plasma membrane"/>
    <property type="evidence" value="ECO:0000314"/>
    <property type="project" value="UniProtKB"/>
</dbReference>
<dbReference type="GO" id="GO:0045202">
    <property type="term" value="C:synapse"/>
    <property type="evidence" value="ECO:0007669"/>
    <property type="project" value="Ensembl"/>
</dbReference>
<dbReference type="GO" id="GO:0031982">
    <property type="term" value="C:vesicle"/>
    <property type="evidence" value="ECO:0007005"/>
    <property type="project" value="UniProtKB"/>
</dbReference>
<dbReference type="GO" id="GO:0003924">
    <property type="term" value="F:GTPase activity"/>
    <property type="evidence" value="ECO:0000304"/>
    <property type="project" value="ProtInc"/>
</dbReference>
<dbReference type="GO" id="GO:0051020">
    <property type="term" value="F:GTPase binding"/>
    <property type="evidence" value="ECO:0000353"/>
    <property type="project" value="UniProtKB"/>
</dbReference>
<dbReference type="GO" id="GO:0044877">
    <property type="term" value="F:protein-containing complex binding"/>
    <property type="evidence" value="ECO:0000314"/>
    <property type="project" value="MGI"/>
</dbReference>
<dbReference type="GO" id="GO:0030159">
    <property type="term" value="F:signaling receptor complex adaptor activity"/>
    <property type="evidence" value="ECO:0000318"/>
    <property type="project" value="GO_Central"/>
</dbReference>
<dbReference type="GO" id="GO:0007186">
    <property type="term" value="P:G protein-coupled receptor signaling pathway"/>
    <property type="evidence" value="ECO:0000318"/>
    <property type="project" value="GO_Central"/>
</dbReference>
<dbReference type="GO" id="GO:1901379">
    <property type="term" value="P:regulation of potassium ion transmembrane transport"/>
    <property type="evidence" value="ECO:0000315"/>
    <property type="project" value="UniProtKB"/>
</dbReference>
<dbReference type="CDD" id="cd00200">
    <property type="entry name" value="WD40"/>
    <property type="match status" value="1"/>
</dbReference>
<dbReference type="FunFam" id="2.130.10.10:FF:000007">
    <property type="entry name" value="Guanine nucleotide-binding protein G(I)/G(S)/G(T) subunit beta-1"/>
    <property type="match status" value="1"/>
</dbReference>
<dbReference type="Gene3D" id="2.130.10.10">
    <property type="entry name" value="YVTN repeat-like/Quinoprotein amine dehydrogenase"/>
    <property type="match status" value="1"/>
</dbReference>
<dbReference type="InterPro" id="IPR020472">
    <property type="entry name" value="G-protein_beta_WD-40_rep"/>
</dbReference>
<dbReference type="InterPro" id="IPR001632">
    <property type="entry name" value="Gprotein_B"/>
</dbReference>
<dbReference type="InterPro" id="IPR016346">
    <property type="entry name" value="Guanine_nucleotide-bd_bsu"/>
</dbReference>
<dbReference type="InterPro" id="IPR015943">
    <property type="entry name" value="WD40/YVTN_repeat-like_dom_sf"/>
</dbReference>
<dbReference type="InterPro" id="IPR019775">
    <property type="entry name" value="WD40_repeat_CS"/>
</dbReference>
<dbReference type="InterPro" id="IPR036322">
    <property type="entry name" value="WD40_repeat_dom_sf"/>
</dbReference>
<dbReference type="InterPro" id="IPR001680">
    <property type="entry name" value="WD40_rpt"/>
</dbReference>
<dbReference type="PANTHER" id="PTHR19850">
    <property type="entry name" value="GUANINE NUCLEOTIDE-BINDING PROTEIN BETA G PROTEIN BETA"/>
    <property type="match status" value="1"/>
</dbReference>
<dbReference type="Pfam" id="PF25391">
    <property type="entry name" value="WD40_Gbeta"/>
    <property type="match status" value="1"/>
</dbReference>
<dbReference type="PIRSF" id="PIRSF002394">
    <property type="entry name" value="GN-bd_beta"/>
    <property type="match status" value="1"/>
</dbReference>
<dbReference type="PRINTS" id="PR00319">
    <property type="entry name" value="GPROTEINB"/>
</dbReference>
<dbReference type="PRINTS" id="PR00320">
    <property type="entry name" value="GPROTEINBRPT"/>
</dbReference>
<dbReference type="SMART" id="SM00320">
    <property type="entry name" value="WD40"/>
    <property type="match status" value="7"/>
</dbReference>
<dbReference type="SUPFAM" id="SSF50978">
    <property type="entry name" value="WD40 repeat-like"/>
    <property type="match status" value="1"/>
</dbReference>
<dbReference type="PROSITE" id="PS00678">
    <property type="entry name" value="WD_REPEATS_1"/>
    <property type="match status" value="3"/>
</dbReference>
<dbReference type="PROSITE" id="PS50082">
    <property type="entry name" value="WD_REPEATS_2"/>
    <property type="match status" value="6"/>
</dbReference>
<dbReference type="PROSITE" id="PS50294">
    <property type="entry name" value="WD_REPEATS_REGION"/>
    <property type="match status" value="1"/>
</dbReference>
<comment type="function">
    <text>Guanine nucleotide-binding proteins (G proteins) are involved as a modulator or transducer in various transmembrane signaling systems. The beta and gamma chains are required for the GTPase activity, for replacement of GDP by GTP, and for G protein-effector interaction.</text>
</comment>
<comment type="subunit">
    <text evidence="2 3 4 5 6">G proteins are composed of 3 units, alpha, beta and gamma. In this context, interacts with GNAI2 and GNG2 (PubMed:28219978). Interacts with ARHGEF18 and RASD2. Interacts with ATXN10. Interacts with SCN8A (PubMed:26900580).</text>
</comment>
<comment type="interaction">
    <interactant intactId="EBI-356942">
        <id>P62879</id>
    </interactant>
    <interactant intactId="EBI-1048913">
        <id>Q9H0Y0</id>
        <label>ATG10</label>
    </interactant>
    <organismsDiffer>false</organismsDiffer>
    <experiments>3</experiments>
</comment>
<comment type="interaction">
    <interactant intactId="EBI-356942">
        <id>P62879</id>
    </interactant>
    <interactant intactId="EBI-988094">
        <id>Q9NT62</id>
        <label>ATG3</label>
    </interactant>
    <organismsDiffer>false</organismsDiffer>
    <experiments>3</experiments>
</comment>
<comment type="interaction">
    <interactant intactId="EBI-356942">
        <id>P62879</id>
    </interactant>
    <interactant intactId="EBI-349854">
        <id>P13569</id>
        <label>CFTR</label>
    </interactant>
    <organismsDiffer>false</organismsDiffer>
    <experiments>12</experiments>
</comment>
<comment type="interaction">
    <interactant intactId="EBI-356942">
        <id>P62879</id>
    </interactant>
    <interactant intactId="EBI-466029">
        <id>P42858</id>
        <label>HTT</label>
    </interactant>
    <organismsDiffer>false</organismsDiffer>
    <experiments>10</experiments>
</comment>
<comment type="interaction">
    <interactant intactId="EBI-356942">
        <id>P62879</id>
    </interactant>
    <interactant intactId="EBI-21251460">
        <id>O60260-5</id>
        <label>PRKN</label>
    </interactant>
    <organismsDiffer>false</organismsDiffer>
    <experiments>3</experiments>
</comment>
<comment type="interaction">
    <interactant intactId="EBI-356942">
        <id>P62879</id>
    </interactant>
    <interactant intactId="EBI-396669">
        <id>Q9Y3C5</id>
        <label>RNF11</label>
    </interactant>
    <organismsDiffer>false</organismsDiffer>
    <experiments>3</experiments>
</comment>
<comment type="interaction">
    <interactant intactId="EBI-356942">
        <id>P62879</id>
    </interactant>
    <interactant intactId="EBI-985879">
        <id>P37840</id>
        <label>SNCA</label>
    </interactant>
    <organismsDiffer>false</organismsDiffer>
    <experiments>3</experiments>
</comment>
<comment type="interaction">
    <interactant intactId="EBI-356942">
        <id>P62879</id>
    </interactant>
    <interactant intactId="EBI-990792">
        <id>P00441</id>
        <label>SOD1</label>
    </interactant>
    <organismsDiffer>false</organismsDiffer>
    <experiments>3</experiments>
</comment>
<comment type="interaction">
    <interactant intactId="EBI-356942">
        <id>P62879</id>
    </interactant>
    <interactant intactId="EBI-5235340">
        <id>Q7Z699</id>
        <label>SPRED1</label>
    </interactant>
    <organismsDiffer>false</organismsDiffer>
    <experiments>3</experiments>
</comment>
<comment type="interaction">
    <interactant intactId="EBI-356942">
        <id>P62879</id>
    </interactant>
    <interactant intactId="EBI-372899">
        <id>Q13148</id>
        <label>TARDBP</label>
    </interactant>
    <organismsDiffer>false</organismsDiffer>
    <experiments>7</experiments>
</comment>
<comment type="interaction">
    <interactant intactId="EBI-356942">
        <id>P62879</id>
    </interactant>
    <interactant intactId="EBI-719691">
        <id>O00762</id>
        <label>UBE2C</label>
    </interactant>
    <organismsDiffer>false</organismsDiffer>
    <experiments>3</experiments>
</comment>
<comment type="interaction">
    <interactant intactId="EBI-356942">
        <id>P62879</id>
    </interactant>
    <interactant intactId="EBI-743540">
        <id>P51668</id>
        <label>UBE2D1</label>
    </interactant>
    <organismsDiffer>false</organismsDiffer>
    <experiments>3</experiments>
</comment>
<comment type="interaction">
    <interactant intactId="EBI-356942">
        <id>P62879</id>
    </interactant>
    <interactant intactId="EBI-347677">
        <id>P62837</id>
        <label>UBE2D2</label>
    </interactant>
    <organismsDiffer>false</organismsDiffer>
    <experiments>3</experiments>
</comment>
<comment type="interaction">
    <interactant intactId="EBI-356942">
        <id>P62879</id>
    </interactant>
    <interactant intactId="EBI-348268">
        <id>P61077</id>
        <label>UBE2D3</label>
    </interactant>
    <organismsDiffer>false</organismsDiffer>
    <experiments>3</experiments>
</comment>
<comment type="interaction">
    <interactant intactId="EBI-356942">
        <id>P62879</id>
    </interactant>
    <interactant intactId="EBI-745527">
        <id>Q9Y2X8</id>
        <label>UBE2D4</label>
    </interactant>
    <organismsDiffer>false</organismsDiffer>
    <experiments>3</experiments>
</comment>
<comment type="interaction">
    <interactant intactId="EBI-356942">
        <id>P62879</id>
    </interactant>
    <interactant intactId="EBI-1056876">
        <id>Q969M7</id>
        <label>UBE2F</label>
    </interactant>
    <organismsDiffer>false</organismsDiffer>
    <experiments>3</experiments>
</comment>
<comment type="interaction">
    <interactant intactId="EBI-356942">
        <id>P62879</id>
    </interactant>
    <interactant intactId="EBI-2340619">
        <id>P62253</id>
        <label>UBE2G1</label>
    </interactant>
    <organismsDiffer>false</organismsDiffer>
    <experiments>3</experiments>
</comment>
<comment type="interaction">
    <interactant intactId="EBI-356942">
        <id>P62879</id>
    </interactant>
    <interactant intactId="EBI-2129909">
        <id>P62256</id>
        <label>UBE2H</label>
    </interactant>
    <organismsDiffer>false</organismsDiffer>
    <experiments>3</experiments>
</comment>
<comment type="interaction">
    <interactant intactId="EBI-356942">
        <id>P62879</id>
    </interactant>
    <interactant intactId="EBI-10180829">
        <id>Q7KZS0</id>
        <label>UBE2I</label>
    </interactant>
    <organismsDiffer>false</organismsDiffer>
    <experiments>3</experiments>
</comment>
<comment type="interaction">
    <interactant intactId="EBI-356942">
        <id>P62879</id>
    </interactant>
    <interactant intactId="EBI-2340110">
        <id>Q8N2K1</id>
        <label>UBE2J2</label>
    </interactant>
    <organismsDiffer>false</organismsDiffer>
    <experiments>3</experiments>
</comment>
<comment type="interaction">
    <interactant intactId="EBI-356942">
        <id>P62879</id>
    </interactant>
    <interactant intactId="EBI-473850">
        <id>P61086</id>
        <label>UBE2K</label>
    </interactant>
    <organismsDiffer>false</organismsDiffer>
    <experiments>3</experiments>
</comment>
<comment type="interaction">
    <interactant intactId="EBI-356942">
        <id>P62879</id>
    </interactant>
    <interactant intactId="EBI-2129974">
        <id>O14933</id>
        <label>UBE2L6</label>
    </interactant>
    <organismsDiffer>false</organismsDiffer>
    <experiments>3</experiments>
</comment>
<comment type="interaction">
    <interactant intactId="EBI-356942">
        <id>P62879</id>
    </interactant>
    <interactant intactId="EBI-1041660">
        <id>P61081</id>
        <label>UBE2M</label>
    </interactant>
    <organismsDiffer>false</organismsDiffer>
    <experiments>3</experiments>
</comment>
<comment type="interaction">
    <interactant intactId="EBI-356942">
        <id>P62879</id>
    </interactant>
    <interactant intactId="EBI-2339946">
        <id>Q9C0C9</id>
        <label>UBE2O</label>
    </interactant>
    <organismsDiffer>false</organismsDiffer>
    <experiments>6</experiments>
</comment>
<comment type="interaction">
    <interactant intactId="EBI-356942">
        <id>P62879</id>
    </interactant>
    <interactant intactId="EBI-10258181">
        <id>Q7Z7E8-2</id>
        <label>UBE2Q1</label>
    </interactant>
    <organismsDiffer>false</organismsDiffer>
    <experiments>3</experiments>
</comment>
<comment type="interaction">
    <interactant intactId="EBI-356942">
        <id>P62879</id>
    </interactant>
    <interactant intactId="EBI-2130157">
        <id>Q8WVN8</id>
        <label>UBE2Q2</label>
    </interactant>
    <organismsDiffer>false</organismsDiffer>
    <experiments>3</experiments>
</comment>
<comment type="interaction">
    <interactant intactId="EBI-356942">
        <id>P62879</id>
    </interactant>
    <interactant intactId="EBI-2339823">
        <id>Q16763</id>
        <label>UBE2S</label>
    </interactant>
    <organismsDiffer>false</organismsDiffer>
    <experiments>3</experiments>
</comment>
<comment type="interaction">
    <interactant intactId="EBI-356942">
        <id>P62879</id>
    </interactant>
    <interactant intactId="EBI-25859532">
        <id>Q6NXQ4</id>
        <label>UBE2S</label>
    </interactant>
    <organismsDiffer>false</organismsDiffer>
    <experiments>3</experiments>
</comment>
<comment type="interaction">
    <interactant intactId="EBI-356942">
        <id>P62879</id>
    </interactant>
    <interactant intactId="EBI-2130165">
        <id>Q9NPD8</id>
        <label>UBE2T</label>
    </interactant>
    <organismsDiffer>false</organismsDiffer>
    <experiments>3</experiments>
</comment>
<comment type="interaction">
    <interactant intactId="EBI-356942">
        <id>P62879</id>
    </interactant>
    <interactant intactId="EBI-21897992">
        <id>Q5VVX9-2</id>
        <label>UBE2U</label>
    </interactant>
    <organismsDiffer>false</organismsDiffer>
    <experiments>3</experiments>
</comment>
<comment type="interaction">
    <interactant intactId="EBI-356942">
        <id>P62879</id>
    </interactant>
    <interactant intactId="EBI-12157263">
        <id>P40337-2</id>
        <label>VHL</label>
    </interactant>
    <organismsDiffer>false</organismsDiffer>
    <experiments>3</experiments>
</comment>
<comment type="subcellular location">
    <subcellularLocation>
        <location evidence="3">Cytoplasm</location>
        <location evidence="3">Perinuclear region</location>
    </subcellularLocation>
    <subcellularLocation>
        <location evidence="6">Cell membrane</location>
    </subcellularLocation>
</comment>
<comment type="alternative products">
    <event type="alternative splicing"/>
    <isoform>
        <id>P62879-1</id>
        <name>1</name>
        <sequence type="displayed"/>
    </isoform>
    <isoform>
        <id>P62879-2</id>
        <name>2</name>
        <sequence type="described" ref="VSP_056515"/>
    </isoform>
</comment>
<comment type="tissue specificity">
    <text evidence="6">Expressed in all cardiac subcompartments and in the brain, with highest levels in the atrioventricular node and brain.</text>
</comment>
<comment type="disease" evidence="7 8 9">
    <disease id="DI-06217">
        <name>Neurodevelopmental disorder with hypotonia and dysmorphic facies</name>
        <acronym>NEDHYDF</acronym>
        <description>An autosomal dominant disorder characterized by global developmental delay, hypotonia, and variably impaired intellectual development, often with speech delay and delayed walking. Most patients have dysmorphic facial features. Clinical features are highly variable and may include congenital cardiac defects, non-specific renal anomalies, joint contractures or joint hyperextensibility, dry skin, and cryptorchidism.</description>
        <dbReference type="MIM" id="619503"/>
    </disease>
    <text>The disease is caused by variants affecting the gene represented in this entry.</text>
</comment>
<comment type="disease" evidence="6">
    <disease id="DI-06153">
        <name>Sick sinus syndrome 4</name>
        <acronym>SSS4</acronym>
        <description>The term 'sick sinus syndrome' encompasses a variety of conditions caused by sinus node dysfunction. The most common clinical manifestations are syncope, presyncope, dizziness, and fatigue. Electrocardiogram typically shows sinus bradycardia, sinus arrest, and/or sinoatrial block. Episodes of atrial tachycardias coexisting with sinus bradycardia ('tachycardia-bradycardia syndrome') are also common in this disorder. SSS occurs most often in the elderly associated with underlying heart disease or previous cardiac surgery, but can also occur in the fetus, infant, or child without heart disease or other contributing factors. SSS4 is characterized by early and progressive sinus node and atrioventricular conduction dysfunction. Some affected individuals are asymptomatic. SSS4 inheritance is autosomal dominant.</description>
        <dbReference type="MIM" id="619464"/>
    </disease>
    <text>The disease is caused by variants affecting the gene represented in this entry.</text>
</comment>
<comment type="similarity">
    <text evidence="12">Belongs to the WD repeat G protein beta family.</text>
</comment>
<sequence>MSELEQLRQEAEQLRNQIRDARKACGDSTLTQITAGLDPVGRIQMRTRRTLRGHLAKIYAMHWGTDSRLLVSASQDGKLIIWDSYTTNKVHAIPLRSSWVMTCAYAPSGNFVACGGLDNICSIYSLKTREGNVRVSRELPGHTGYLSCCRFLDDNQIITSSGDTTCALWDIETGQQTVGFAGHSGDVMSLSLAPDGRTFVSGACDASIKLWDVRDSMCRQTFIGHESDINAVAFFPNGYAFTTGSDDATCRLFDLRADQELLMYSHDNIICGITSVAFSRSGRLLLAGYDDFNCNIWDAMKGDRAGVLAGHDNRVSCLGVTDDGMAVATGSWDSFLKIWN</sequence>
<proteinExistence type="evidence at protein level"/>
<protein>
    <recommendedName>
        <fullName>Guanine nucleotide-binding protein G(I)/G(S)/G(T) subunit beta-2</fullName>
    </recommendedName>
    <alternativeName>
        <fullName>G protein subunit beta-2</fullName>
    </alternativeName>
    <alternativeName>
        <fullName>Transducin beta chain 2</fullName>
    </alternativeName>
</protein>
<evidence type="ECO:0000250" key="1">
    <source>
        <dbReference type="UniProtKB" id="P62880"/>
    </source>
</evidence>
<evidence type="ECO:0000269" key="2">
    <source>
    </source>
</evidence>
<evidence type="ECO:0000269" key="3">
    <source>
    </source>
</evidence>
<evidence type="ECO:0000269" key="4">
    <source>
    </source>
</evidence>
<evidence type="ECO:0000269" key="5">
    <source>
    </source>
</evidence>
<evidence type="ECO:0000269" key="6">
    <source>
    </source>
</evidence>
<evidence type="ECO:0000269" key="7">
    <source>
    </source>
</evidence>
<evidence type="ECO:0000269" key="8">
    <source>
    </source>
</evidence>
<evidence type="ECO:0000269" key="9">
    <source>
    </source>
</evidence>
<evidence type="ECO:0000269" key="10">
    <source ref="8"/>
</evidence>
<evidence type="ECO:0000303" key="11">
    <source>
    </source>
</evidence>
<evidence type="ECO:0000305" key="12"/>
<evidence type="ECO:0007744" key="13">
    <source>
    </source>
</evidence>
<feature type="initiator methionine" description="Removed" evidence="10 13">
    <location>
        <position position="1"/>
    </location>
</feature>
<feature type="chain" id="PRO_0000127695" description="Guanine nucleotide-binding protein G(I)/G(S)/G(T) subunit beta-2">
    <location>
        <begin position="2"/>
        <end position="340"/>
    </location>
</feature>
<feature type="repeat" description="WD 1">
    <location>
        <begin position="53"/>
        <end position="83"/>
    </location>
</feature>
<feature type="repeat" description="WD 2">
    <location>
        <begin position="95"/>
        <end position="125"/>
    </location>
</feature>
<feature type="repeat" description="WD 3">
    <location>
        <begin position="141"/>
        <end position="170"/>
    </location>
</feature>
<feature type="repeat" description="WD 4">
    <location>
        <begin position="182"/>
        <end position="212"/>
    </location>
</feature>
<feature type="repeat" description="WD 5">
    <location>
        <begin position="224"/>
        <end position="254"/>
    </location>
</feature>
<feature type="repeat" description="WD 6">
    <location>
        <begin position="268"/>
        <end position="298"/>
    </location>
</feature>
<feature type="repeat" description="WD 7">
    <location>
        <begin position="310"/>
        <end position="340"/>
    </location>
</feature>
<feature type="modified residue" description="N-acetylserine" evidence="10 13">
    <location>
        <position position="2"/>
    </location>
</feature>
<feature type="modified residue" description="Phosphotyrosine" evidence="1">
    <location>
        <position position="239"/>
    </location>
</feature>
<feature type="splice variant" id="VSP_056515" description="In isoform 2." evidence="11">
    <location>
        <begin position="1"/>
        <end position="100"/>
    </location>
</feature>
<feature type="sequence variant" id="VAR_086042" description="In SSS4; leads to a sustained activation of cardiac G protein-coupled inwardly-rectifying potassium (GIRK) channels, which is likely to hyperpolarize the myocellular membrane potential and reduce their spontaneous activity; does not affect protein levels, subcellular location, nor interaction with GNAI2 and GNG2." evidence="6">
    <original>R</original>
    <variation>L</variation>
    <location>
        <position position="52"/>
    </location>
</feature>
<feature type="sequence variant" id="VAR_086043" description="In NEDHYDF." evidence="9">
    <original>A</original>
    <variation>T</variation>
    <location>
        <position position="73"/>
    </location>
</feature>
<feature type="sequence variant" id="VAR_086044" description="In NEDHYDF." evidence="7 9">
    <original>G</original>
    <variation>R</variation>
    <location>
        <position position="77"/>
    </location>
</feature>
<feature type="sequence variant" id="VAR_086045" description="In NEDHYDF." evidence="8">
    <original>G</original>
    <variation>W</variation>
    <location>
        <position position="77"/>
    </location>
</feature>
<feature type="sequence variant" id="VAR_086046" description="In NEDHYDF." evidence="9">
    <original>K</original>
    <variation>E</variation>
    <location>
        <position position="89"/>
    </location>
</feature>
<feature type="sequence variant" id="VAR_086047" description="In NEDHYDF." evidence="9">
    <original>K</original>
    <variation>T</variation>
    <location>
        <position position="89"/>
    </location>
</feature>
<feature type="sequence variant" id="VAR_086048" description="In NEDHYDF." evidence="9">
    <original>S</original>
    <variation>L</variation>
    <location>
        <position position="147"/>
    </location>
</feature>
<feature type="sequence conflict" description="In Ref. 2; AAA35922." evidence="12" ref="2">
    <original>D</original>
    <variation>N</variation>
    <location>
        <position position="195"/>
    </location>
</feature>
<organism>
    <name type="scientific">Homo sapiens</name>
    <name type="common">Human</name>
    <dbReference type="NCBI Taxonomy" id="9606"/>
    <lineage>
        <taxon>Eukaryota</taxon>
        <taxon>Metazoa</taxon>
        <taxon>Chordata</taxon>
        <taxon>Craniata</taxon>
        <taxon>Vertebrata</taxon>
        <taxon>Euteleostomi</taxon>
        <taxon>Mammalia</taxon>
        <taxon>Eutheria</taxon>
        <taxon>Euarchontoglires</taxon>
        <taxon>Primates</taxon>
        <taxon>Haplorrhini</taxon>
        <taxon>Catarrhini</taxon>
        <taxon>Hominidae</taxon>
        <taxon>Homo</taxon>
    </lineage>
</organism>
<accession>P62879</accession>
<accession>B3KPU1</accession>
<accession>P11016</accession>
<accession>P54312</accession>